<comment type="function">
    <text evidence="5">Transfers mannosyl residues to the hydroxyl group of serine or threonine residues. Coexpression of both POMT1 and POMT2 is necessary for enzyme activity, expression of either POMT1 or POMT2 alone is insufficient.</text>
</comment>
<comment type="catalytic activity">
    <reaction evidence="5">
        <text>a di-trans,poly-cis-dolichyl beta-D-mannosyl phosphate + L-seryl-[protein] = 3-O-(alpha-D-mannosyl)-L-seryl-[protein] + a di-trans,poly-cis-dolichyl phosphate + H(+)</text>
        <dbReference type="Rhea" id="RHEA:17377"/>
        <dbReference type="Rhea" id="RHEA-COMP:9863"/>
        <dbReference type="Rhea" id="RHEA-COMP:13546"/>
        <dbReference type="Rhea" id="RHEA-COMP:19498"/>
        <dbReference type="Rhea" id="RHEA-COMP:19501"/>
        <dbReference type="ChEBI" id="CHEBI:15378"/>
        <dbReference type="ChEBI" id="CHEBI:29999"/>
        <dbReference type="ChEBI" id="CHEBI:57683"/>
        <dbReference type="ChEBI" id="CHEBI:58211"/>
        <dbReference type="ChEBI" id="CHEBI:137321"/>
        <dbReference type="EC" id="2.4.1.109"/>
    </reaction>
</comment>
<comment type="catalytic activity">
    <reaction evidence="5">
        <text>a di-trans,poly-cis-dolichyl beta-D-mannosyl phosphate + L-threonyl-[protein] = 3-O-(alpha-D-mannosyl)-L-threonyl-[protein] + a di-trans,poly-cis-dolichyl phosphate + H(+)</text>
        <dbReference type="Rhea" id="RHEA:53396"/>
        <dbReference type="Rhea" id="RHEA-COMP:11060"/>
        <dbReference type="Rhea" id="RHEA-COMP:13547"/>
        <dbReference type="Rhea" id="RHEA-COMP:19498"/>
        <dbReference type="Rhea" id="RHEA-COMP:19501"/>
        <dbReference type="ChEBI" id="CHEBI:15378"/>
        <dbReference type="ChEBI" id="CHEBI:30013"/>
        <dbReference type="ChEBI" id="CHEBI:57683"/>
        <dbReference type="ChEBI" id="CHEBI:58211"/>
        <dbReference type="ChEBI" id="CHEBI:137323"/>
        <dbReference type="EC" id="2.4.1.109"/>
    </reaction>
</comment>
<comment type="pathway">
    <text evidence="5">Protein modification; protein glycosylation.</text>
</comment>
<comment type="subcellular location">
    <subcellularLocation>
        <location evidence="1">Endoplasmic reticulum membrane</location>
        <topology evidence="2">Multi-pass membrane protein</topology>
    </subcellularLocation>
</comment>
<comment type="tissue specificity">
    <text evidence="5">Widely expressed. Has particularly strong expression in testis, ovary, brain, liver and heart.</text>
</comment>
<comment type="developmental stage">
    <text evidence="4 5">Detected throughout development (PubMed:18632251, PubMed:20466645). Highest expression levels are found at 0 hours post-fertilization (hpf), probably due to perdurance of maternal transcripts (PubMed:20466645). Ubiquitously expressed during early stages of development (PubMed:18632251, PubMed:20466645). At 16-24 hpf, mainly found in eye, brain and somites (PubMed:18632251, PubMed:20466645). At 30 hpf, has strongest expression in forebrain, cerebellum and hindbrain (PubMed:18632251).</text>
</comment>
<comment type="disruption phenotype">
    <text evidence="5">Morpholino knockdown of the protein results in developmental delays at 18 hours post fertilization (hpf). At 48-72 hpf, the tail is slightly curved and somite boundaries are also abnormally curved. Swim bladders are incompletely formed. Glycosylation of alpha-dystroglycan (dag1) is severely reduced.</text>
</comment>
<comment type="similarity">
    <text evidence="7">Belongs to the glycosyltransferase 39 family.</text>
</comment>
<keyword id="KW-0256">Endoplasmic reticulum</keyword>
<keyword id="KW-0328">Glycosyltransferase</keyword>
<keyword id="KW-0472">Membrane</keyword>
<keyword id="KW-1185">Reference proteome</keyword>
<keyword id="KW-0677">Repeat</keyword>
<keyword id="KW-0808">Transferase</keyword>
<keyword id="KW-0812">Transmembrane</keyword>
<keyword id="KW-1133">Transmembrane helix</keyword>
<proteinExistence type="evidence at protein level"/>
<evidence type="ECO:0000250" key="1">
    <source>
        <dbReference type="UniProtKB" id="Q9Y6A1"/>
    </source>
</evidence>
<evidence type="ECO:0000255" key="2"/>
<evidence type="ECO:0000255" key="3">
    <source>
        <dbReference type="PROSITE-ProRule" id="PRU00131"/>
    </source>
</evidence>
<evidence type="ECO:0000269" key="4">
    <source>
    </source>
</evidence>
<evidence type="ECO:0000269" key="5">
    <source>
    </source>
</evidence>
<evidence type="ECO:0000303" key="6">
    <source>
    </source>
</evidence>
<evidence type="ECO:0000305" key="7"/>
<evidence type="ECO:0000312" key="8">
    <source>
        <dbReference type="EMBL" id="AAI24441.1"/>
    </source>
</evidence>
<evidence type="ECO:0000312" key="9">
    <source>
        <dbReference type="EMBL" id="ABH03466.1"/>
    </source>
</evidence>
<evidence type="ECO:0000312" key="10">
    <source>
        <dbReference type="EMBL" id="BAJ15895.1"/>
    </source>
</evidence>
<evidence type="ECO:0000312" key="11">
    <source>
        <dbReference type="Proteomes" id="UP000000437"/>
    </source>
</evidence>
<sequence length="720" mass="82084">MQCVKLPVSVTVEINVLLLAVTALALFTRLYGIHFPKAVVFDEVYYGQFLSLYMKQVFFIDESGPPFGHMILALGAYLGGFDGNFVWNRIGAEYPGNVPVWSLRLIPALAGSFCVPLAYLVVVELGYSHFSALGACALLLMENSLIVQSRFMLLESVLIFFLLLAVLSYLRFHKARNSFFKWFWLVICGVSCAFGIGVKYMGMFTYFLLLSLAAVHTWQLIGDQTLSHGKVMFQVLVRFLALVVLPVIMYLGFFYIHLTLLYRSGPHDQMMSSAFQASLEGGLARITQGQPLDVAFGSQVTLRTVSGKPVPCWLHSHKANYPIRYENGRGSSHQQQVTCYPFKDVNNWWIIKDPGRQSLVVSSPPKPVRHGDIIQLLHGMTTRYLNTHDVAAPMSPHSQEVSGYIDFNVSMPAQNLWRVDIVNRESEKEIWKTILSEVRLVHVNTSAVLKLSGASLPEWGFKQLEVVGDKIYKGYQQTGMWNVEEHRYGRSQEPKERELELKSPTHSDVNKNLTFMAKFLELQWKMLTVKNEESEHKYSSSPLEWITMDTNIAYWLHPSSNAQIHFIGNIVTWTTGNITLVVYCLLFLTYLLRRRRKVEDIPQDSWEQLVLAGVVCLGGWAVNYLPFFLMEKTLFLYHYLPALTFKILQIPIVTEHLYIHVLRSSAQQKAFGGVILAVLCSVYMSYHSLSPLTYGQPALTSDKLAELRWRESWDILLRKR</sequence>
<gene>
    <name evidence="6" type="primary">pomt1</name>
</gene>
<organism evidence="11">
    <name type="scientific">Danio rerio</name>
    <name type="common">Zebrafish</name>
    <name type="synonym">Brachydanio rerio</name>
    <dbReference type="NCBI Taxonomy" id="7955"/>
    <lineage>
        <taxon>Eukaryota</taxon>
        <taxon>Metazoa</taxon>
        <taxon>Chordata</taxon>
        <taxon>Craniata</taxon>
        <taxon>Vertebrata</taxon>
        <taxon>Euteleostomi</taxon>
        <taxon>Actinopterygii</taxon>
        <taxon>Neopterygii</taxon>
        <taxon>Teleostei</taxon>
        <taxon>Ostariophysi</taxon>
        <taxon>Cypriniformes</taxon>
        <taxon>Danionidae</taxon>
        <taxon>Danioninae</taxon>
        <taxon>Danio</taxon>
    </lineage>
</organism>
<accession>F1QF89</accession>
<accession>E0CZJ9</accession>
<accession>Q08C27</accession>
<accession>Q0PIP3</accession>
<protein>
    <recommendedName>
        <fullName evidence="6">Protein O-mannosyl-transferase 1</fullName>
        <ecNumber evidence="5">2.4.1.109</ecNumber>
    </recommendedName>
</protein>
<reference evidence="9" key="1">
    <citation type="journal article" date="2008" name="Genomics">
        <title>Genes required for functional glycosylation of dystroglycan are conserved in zebrafish.</title>
        <authorList>
            <person name="Moore C.J."/>
            <person name="Goh H.T."/>
            <person name="Hewitt J.E."/>
        </authorList>
    </citation>
    <scope>NUCLEOTIDE SEQUENCE [MRNA]</scope>
    <scope>DEVELOPMENTAL STAGE</scope>
</reference>
<reference evidence="10" key="2">
    <citation type="journal article" date="2010" name="Glycobiology">
        <title>Protein O-mannosylation is necessary for normal embryonic development in zebrafish.</title>
        <authorList>
            <person name="Avsar-Ban E."/>
            <person name="Ishikawa H."/>
            <person name="Manya H."/>
            <person name="Watanabe M."/>
            <person name="Akiyama S."/>
            <person name="Miyake H."/>
            <person name="Endo T."/>
            <person name="Tamaru Y."/>
        </authorList>
    </citation>
    <scope>NUCLEOTIDE SEQUENCE [MRNA]</scope>
    <scope>FUNCTION</scope>
    <scope>CATALYTIC ACTIVITY</scope>
    <scope>PATHWAY</scope>
    <scope>TISSUE SPECIFICITY</scope>
    <scope>DEVELOPMENTAL STAGE</scope>
    <scope>DISRUPTION PHENOTYPE</scope>
</reference>
<reference evidence="11" key="3">
    <citation type="journal article" date="2013" name="Nature">
        <title>The zebrafish reference genome sequence and its relationship to the human genome.</title>
        <authorList>
            <person name="Howe K."/>
            <person name="Clark M.D."/>
            <person name="Torroja C.F."/>
            <person name="Torrance J."/>
            <person name="Berthelot C."/>
            <person name="Muffato M."/>
            <person name="Collins J.E."/>
            <person name="Humphray S."/>
            <person name="McLaren K."/>
            <person name="Matthews L."/>
            <person name="McLaren S."/>
            <person name="Sealy I."/>
            <person name="Caccamo M."/>
            <person name="Churcher C."/>
            <person name="Scott C."/>
            <person name="Barrett J.C."/>
            <person name="Koch R."/>
            <person name="Rauch G.J."/>
            <person name="White S."/>
            <person name="Chow W."/>
            <person name="Kilian B."/>
            <person name="Quintais L.T."/>
            <person name="Guerra-Assuncao J.A."/>
            <person name="Zhou Y."/>
            <person name="Gu Y."/>
            <person name="Yen J."/>
            <person name="Vogel J.H."/>
            <person name="Eyre T."/>
            <person name="Redmond S."/>
            <person name="Banerjee R."/>
            <person name="Chi J."/>
            <person name="Fu B."/>
            <person name="Langley E."/>
            <person name="Maguire S.F."/>
            <person name="Laird G.K."/>
            <person name="Lloyd D."/>
            <person name="Kenyon E."/>
            <person name="Donaldson S."/>
            <person name="Sehra H."/>
            <person name="Almeida-King J."/>
            <person name="Loveland J."/>
            <person name="Trevanion S."/>
            <person name="Jones M."/>
            <person name="Quail M."/>
            <person name="Willey D."/>
            <person name="Hunt A."/>
            <person name="Burton J."/>
            <person name="Sims S."/>
            <person name="McLay K."/>
            <person name="Plumb B."/>
            <person name="Davis J."/>
            <person name="Clee C."/>
            <person name="Oliver K."/>
            <person name="Clark R."/>
            <person name="Riddle C."/>
            <person name="Elliot D."/>
            <person name="Threadgold G."/>
            <person name="Harden G."/>
            <person name="Ware D."/>
            <person name="Begum S."/>
            <person name="Mortimore B."/>
            <person name="Kerry G."/>
            <person name="Heath P."/>
            <person name="Phillimore B."/>
            <person name="Tracey A."/>
            <person name="Corby N."/>
            <person name="Dunn M."/>
            <person name="Johnson C."/>
            <person name="Wood J."/>
            <person name="Clark S."/>
            <person name="Pelan S."/>
            <person name="Griffiths G."/>
            <person name="Smith M."/>
            <person name="Glithero R."/>
            <person name="Howden P."/>
            <person name="Barker N."/>
            <person name="Lloyd C."/>
            <person name="Stevens C."/>
            <person name="Harley J."/>
            <person name="Holt K."/>
            <person name="Panagiotidis G."/>
            <person name="Lovell J."/>
            <person name="Beasley H."/>
            <person name="Henderson C."/>
            <person name="Gordon D."/>
            <person name="Auger K."/>
            <person name="Wright D."/>
            <person name="Collins J."/>
            <person name="Raisen C."/>
            <person name="Dyer L."/>
            <person name="Leung K."/>
            <person name="Robertson L."/>
            <person name="Ambridge K."/>
            <person name="Leongamornlert D."/>
            <person name="McGuire S."/>
            <person name="Gilderthorp R."/>
            <person name="Griffiths C."/>
            <person name="Manthravadi D."/>
            <person name="Nichol S."/>
            <person name="Barker G."/>
            <person name="Whitehead S."/>
            <person name="Kay M."/>
            <person name="Brown J."/>
            <person name="Murnane C."/>
            <person name="Gray E."/>
            <person name="Humphries M."/>
            <person name="Sycamore N."/>
            <person name="Barker D."/>
            <person name="Saunders D."/>
            <person name="Wallis J."/>
            <person name="Babbage A."/>
            <person name="Hammond S."/>
            <person name="Mashreghi-Mohammadi M."/>
            <person name="Barr L."/>
            <person name="Martin S."/>
            <person name="Wray P."/>
            <person name="Ellington A."/>
            <person name="Matthews N."/>
            <person name="Ellwood M."/>
            <person name="Woodmansey R."/>
            <person name="Clark G."/>
            <person name="Cooper J."/>
            <person name="Tromans A."/>
            <person name="Grafham D."/>
            <person name="Skuce C."/>
            <person name="Pandian R."/>
            <person name="Andrews R."/>
            <person name="Harrison E."/>
            <person name="Kimberley A."/>
            <person name="Garnett J."/>
            <person name="Fosker N."/>
            <person name="Hall R."/>
            <person name="Garner P."/>
            <person name="Kelly D."/>
            <person name="Bird C."/>
            <person name="Palmer S."/>
            <person name="Gehring I."/>
            <person name="Berger A."/>
            <person name="Dooley C.M."/>
            <person name="Ersan-Urun Z."/>
            <person name="Eser C."/>
            <person name="Geiger H."/>
            <person name="Geisler M."/>
            <person name="Karotki L."/>
            <person name="Kirn A."/>
            <person name="Konantz J."/>
            <person name="Konantz M."/>
            <person name="Oberlander M."/>
            <person name="Rudolph-Geiger S."/>
            <person name="Teucke M."/>
            <person name="Lanz C."/>
            <person name="Raddatz G."/>
            <person name="Osoegawa K."/>
            <person name="Zhu B."/>
            <person name="Rapp A."/>
            <person name="Widaa S."/>
            <person name="Langford C."/>
            <person name="Yang F."/>
            <person name="Schuster S.C."/>
            <person name="Carter N.P."/>
            <person name="Harrow J."/>
            <person name="Ning Z."/>
            <person name="Herrero J."/>
            <person name="Searle S.M."/>
            <person name="Enright A."/>
            <person name="Geisler R."/>
            <person name="Plasterk R.H."/>
            <person name="Lee C."/>
            <person name="Westerfield M."/>
            <person name="de Jong P.J."/>
            <person name="Zon L.I."/>
            <person name="Postlethwait J.H."/>
            <person name="Nusslein-Volhard C."/>
            <person name="Hubbard T.J."/>
            <person name="Roest Crollius H."/>
            <person name="Rogers J."/>
            <person name="Stemple D.L."/>
        </authorList>
    </citation>
    <scope>NUCLEOTIDE SEQUENCE [LARGE SCALE GENOMIC DNA]</scope>
    <source>
        <strain evidence="11">Tuebingen</strain>
    </source>
</reference>
<reference evidence="8" key="4">
    <citation type="submission" date="2008-04" db="EMBL/GenBank/DDBJ databases">
        <authorList>
            <consortium name="NIH - Zebrafish Gene Collection (ZGC) project"/>
        </authorList>
    </citation>
    <scope>NUCLEOTIDE SEQUENCE [LARGE SCALE MRNA]</scope>
    <source>
        <tissue evidence="8">Olfactory epithelium</tissue>
    </source>
</reference>
<name>POMT1_DANRE</name>
<dbReference type="EC" id="2.4.1.109" evidence="5"/>
<dbReference type="EMBL" id="DQ826748">
    <property type="protein sequence ID" value="ABH03466.1"/>
    <property type="molecule type" value="mRNA"/>
</dbReference>
<dbReference type="EMBL" id="AB281275">
    <property type="protein sequence ID" value="BAJ15895.1"/>
    <property type="molecule type" value="mRNA"/>
</dbReference>
<dbReference type="EMBL" id="CU856180">
    <property type="status" value="NOT_ANNOTATED_CDS"/>
    <property type="molecule type" value="Genomic_DNA"/>
</dbReference>
<dbReference type="EMBL" id="BC124440">
    <property type="protein sequence ID" value="AAI24441.1"/>
    <property type="molecule type" value="mRNA"/>
</dbReference>
<dbReference type="EMBL" id="BC165221">
    <property type="protein sequence ID" value="AAI65221.1"/>
    <property type="molecule type" value="mRNA"/>
</dbReference>
<dbReference type="RefSeq" id="NP_001041532.2">
    <property type="nucleotide sequence ID" value="NM_001048067.2"/>
</dbReference>
<dbReference type="SMR" id="F1QF89"/>
<dbReference type="FunCoup" id="F1QF89">
    <property type="interactions" value="424"/>
</dbReference>
<dbReference type="STRING" id="7955.ENSDARP00000086435"/>
<dbReference type="CAZy" id="GT39">
    <property type="family name" value="Glycosyltransferase Family 39"/>
</dbReference>
<dbReference type="PaxDb" id="7955-ENSDARP00000086435"/>
<dbReference type="Ensembl" id="ENSDART00000092002">
    <property type="protein sequence ID" value="ENSDARP00000086435"/>
    <property type="gene ID" value="ENSDARG00000067670"/>
</dbReference>
<dbReference type="Ensembl" id="ENSDART00000182712">
    <property type="protein sequence ID" value="ENSDARP00000157635"/>
    <property type="gene ID" value="ENSDARG00000112005"/>
</dbReference>
<dbReference type="Ensembl" id="ENSDART00000188552">
    <property type="protein sequence ID" value="ENSDARP00000155683"/>
    <property type="gene ID" value="ENSDARG00000067670"/>
</dbReference>
<dbReference type="GeneID" id="569769"/>
<dbReference type="KEGG" id="dre:569769"/>
<dbReference type="AGR" id="ZFIN:ZDB-GENE-060929-966"/>
<dbReference type="CTD" id="10585"/>
<dbReference type="ZFIN" id="ZDB-GENE-060929-966">
    <property type="gene designation" value="pomt1"/>
</dbReference>
<dbReference type="eggNOG" id="KOG3359">
    <property type="taxonomic scope" value="Eukaryota"/>
</dbReference>
<dbReference type="HOGENOM" id="CLU_008438_1_0_1"/>
<dbReference type="InParanoid" id="F1QF89"/>
<dbReference type="OMA" id="NCHLNAP"/>
<dbReference type="OrthoDB" id="292747at2759"/>
<dbReference type="PhylomeDB" id="F1QF89"/>
<dbReference type="TreeFam" id="TF300552"/>
<dbReference type="Reactome" id="R-DRE-5173105">
    <property type="pathway name" value="O-linked glycosylation"/>
</dbReference>
<dbReference type="UniPathway" id="UPA00378"/>
<dbReference type="PRO" id="PR:F1QF89"/>
<dbReference type="Proteomes" id="UP000000437">
    <property type="component" value="Alternate scaffold 5"/>
</dbReference>
<dbReference type="Proteomes" id="UP000000437">
    <property type="component" value="Chromosome 5"/>
</dbReference>
<dbReference type="Bgee" id="ENSDARG00000067670">
    <property type="expression patterns" value="Expressed in early embryo and 19 other cell types or tissues"/>
</dbReference>
<dbReference type="GO" id="GO:0005783">
    <property type="term" value="C:endoplasmic reticulum"/>
    <property type="evidence" value="ECO:0000318"/>
    <property type="project" value="GO_Central"/>
</dbReference>
<dbReference type="GO" id="GO:0005789">
    <property type="term" value="C:endoplasmic reticulum membrane"/>
    <property type="evidence" value="ECO:0007669"/>
    <property type="project" value="UniProtKB-SubCell"/>
</dbReference>
<dbReference type="GO" id="GO:0004169">
    <property type="term" value="F:dolichyl-phosphate-mannose-protein mannosyltransferase activity"/>
    <property type="evidence" value="ECO:0000316"/>
    <property type="project" value="ZFIN"/>
</dbReference>
<dbReference type="GO" id="GO:0035269">
    <property type="term" value="P:protein O-linked mannosylation"/>
    <property type="evidence" value="ECO:0000315"/>
    <property type="project" value="ZFIN"/>
</dbReference>
<dbReference type="GO" id="GO:0042478">
    <property type="term" value="P:regulation of eye photoreceptor cell development"/>
    <property type="evidence" value="ECO:0000315"/>
    <property type="project" value="ZFIN"/>
</dbReference>
<dbReference type="GO" id="GO:0048742">
    <property type="term" value="P:regulation of skeletal muscle fiber development"/>
    <property type="evidence" value="ECO:0000315"/>
    <property type="project" value="ZFIN"/>
</dbReference>
<dbReference type="CDD" id="cd23281">
    <property type="entry name" value="beta-trefoil_MIR_POMT1"/>
    <property type="match status" value="1"/>
</dbReference>
<dbReference type="FunFam" id="2.80.10.50:FF:000012">
    <property type="entry name" value="Protein O-mannosyl-transferase 1"/>
    <property type="match status" value="1"/>
</dbReference>
<dbReference type="Gene3D" id="2.80.10.50">
    <property type="match status" value="1"/>
</dbReference>
<dbReference type="InterPro" id="IPR027005">
    <property type="entry name" value="GlyclTrfase_39-like"/>
</dbReference>
<dbReference type="InterPro" id="IPR003342">
    <property type="entry name" value="Glyco_trans_39/83"/>
</dbReference>
<dbReference type="InterPro" id="IPR036300">
    <property type="entry name" value="MIR_dom_sf"/>
</dbReference>
<dbReference type="InterPro" id="IPR016093">
    <property type="entry name" value="MIR_motif"/>
</dbReference>
<dbReference type="InterPro" id="IPR032421">
    <property type="entry name" value="PMT_4TMC"/>
</dbReference>
<dbReference type="PANTHER" id="PTHR10050">
    <property type="entry name" value="DOLICHYL-PHOSPHATE-MANNOSE--PROTEIN MANNOSYLTRANSFERASE"/>
    <property type="match status" value="1"/>
</dbReference>
<dbReference type="PANTHER" id="PTHR10050:SF51">
    <property type="entry name" value="PROTEIN O-MANNOSYL-TRANSFERASE 1"/>
    <property type="match status" value="1"/>
</dbReference>
<dbReference type="Pfam" id="PF02815">
    <property type="entry name" value="MIR"/>
    <property type="match status" value="1"/>
</dbReference>
<dbReference type="Pfam" id="PF02366">
    <property type="entry name" value="PMT"/>
    <property type="match status" value="1"/>
</dbReference>
<dbReference type="Pfam" id="PF16192">
    <property type="entry name" value="PMT_4TMC"/>
    <property type="match status" value="1"/>
</dbReference>
<dbReference type="SMART" id="SM00472">
    <property type="entry name" value="MIR"/>
    <property type="match status" value="3"/>
</dbReference>
<dbReference type="SUPFAM" id="SSF82109">
    <property type="entry name" value="MIR domain"/>
    <property type="match status" value="1"/>
</dbReference>
<dbReference type="PROSITE" id="PS50919">
    <property type="entry name" value="MIR"/>
    <property type="match status" value="3"/>
</dbReference>
<feature type="chain" id="PRO_0000442137" description="Protein O-mannosyl-transferase 1">
    <location>
        <begin position="1"/>
        <end position="720"/>
    </location>
</feature>
<feature type="transmembrane region" description="Helical" evidence="2">
    <location>
        <begin position="7"/>
        <end position="27"/>
    </location>
</feature>
<feature type="transmembrane region" description="Helical" evidence="2">
    <location>
        <begin position="67"/>
        <end position="87"/>
    </location>
</feature>
<feature type="transmembrane region" description="Helical" evidence="2">
    <location>
        <begin position="105"/>
        <end position="125"/>
    </location>
</feature>
<feature type="transmembrane region" description="Helical" evidence="2">
    <location>
        <begin position="127"/>
        <end position="147"/>
    </location>
</feature>
<feature type="transmembrane region" description="Helical" evidence="2">
    <location>
        <begin position="150"/>
        <end position="170"/>
    </location>
</feature>
<feature type="transmembrane region" description="Helical" evidence="2">
    <location>
        <begin position="178"/>
        <end position="198"/>
    </location>
</feature>
<feature type="transmembrane region" description="Helical" evidence="2">
    <location>
        <begin position="201"/>
        <end position="221"/>
    </location>
</feature>
<feature type="transmembrane region" description="Helical" evidence="2">
    <location>
        <begin position="239"/>
        <end position="259"/>
    </location>
</feature>
<feature type="transmembrane region" description="Helical" evidence="2">
    <location>
        <begin position="570"/>
        <end position="590"/>
    </location>
</feature>
<feature type="transmembrane region" description="Helical" evidence="2">
    <location>
        <begin position="609"/>
        <end position="629"/>
    </location>
</feature>
<feature type="transmembrane region" description="Helical" evidence="2">
    <location>
        <begin position="633"/>
        <end position="653"/>
    </location>
</feature>
<feature type="transmembrane region" description="Helical" evidence="2">
    <location>
        <begin position="670"/>
        <end position="690"/>
    </location>
</feature>
<feature type="domain" description="MIR 1" evidence="3">
    <location>
        <begin position="291"/>
        <end position="354"/>
    </location>
</feature>
<feature type="domain" description="MIR 2" evidence="3">
    <location>
        <begin position="365"/>
        <end position="422"/>
    </location>
</feature>
<feature type="domain" description="MIR 3" evidence="3">
    <location>
        <begin position="426"/>
        <end position="486"/>
    </location>
</feature>
<feature type="sequence conflict" description="In Ref. 1; ABH03466." evidence="7" ref="1">
    <original>W</original>
    <variation>R</variation>
    <location>
        <position position="101"/>
    </location>
</feature>
<feature type="sequence conflict" description="In Ref. 4; AAI24441/AAI65221." evidence="7" ref="4">
    <original>N</original>
    <variation>D</variation>
    <location>
        <position position="143"/>
    </location>
</feature>
<feature type="sequence conflict" description="In Ref. 2; BAJ15895." evidence="7" ref="2">
    <original>HK</original>
    <variation>PQ</variation>
    <location>
        <begin position="173"/>
        <end position="174"/>
    </location>
</feature>
<feature type="sequence conflict" description="In Ref. 2; BAJ15895." evidence="7" ref="2">
    <original>F</original>
    <variation>L</variation>
    <location>
        <position position="179"/>
    </location>
</feature>
<feature type="sequence conflict" description="In Ref. 4; AAI24441/AAI65221." evidence="7" ref="4">
    <original>F</original>
    <variation>S</variation>
    <location>
        <position position="179"/>
    </location>
</feature>
<feature type="sequence conflict" description="In Ref. 4; AAI24441/AAI65221." evidence="7" ref="4">
    <original>L</original>
    <variation>Q</variation>
    <location>
        <position position="212"/>
    </location>
</feature>
<feature type="sequence conflict" description="In Ref. 2; BAJ15895 and 4; AAI24441/AAI65221." evidence="7" ref="2 4">
    <original>Q</original>
    <variation>R</variation>
    <location>
        <position position="224"/>
    </location>
</feature>
<feature type="sequence conflict" description="In Ref. 4; AAI24441/AAI65221." evidence="7" ref="4">
    <original>Q</original>
    <variation>H</variation>
    <location>
        <position position="234"/>
    </location>
</feature>
<feature type="sequence conflict" description="In Ref. 1; ABH03466." evidence="7" ref="1">
    <original>V</original>
    <variation>M</variation>
    <location>
        <position position="244"/>
    </location>
</feature>
<feature type="sequence conflict" description="In Ref. 2; BAJ15895." evidence="7" ref="2">
    <original>M</original>
    <variation>I</variation>
    <location>
        <position position="249"/>
    </location>
</feature>
<feature type="sequence conflict" description="In Ref. 2; BAJ15895." evidence="7" ref="2">
    <original>H</original>
    <variation>S</variation>
    <location>
        <position position="267"/>
    </location>
</feature>
<feature type="sequence conflict" description="In Ref. 2; BAJ15895 and 4; AAI24441/AAI65221." evidence="7" ref="2 4">
    <original>K</original>
    <variation>R</variation>
    <location>
        <position position="366"/>
    </location>
</feature>
<feature type="sequence conflict" description="In Ref. 4; AAI24441/AAI65221." evidence="7" ref="4">
    <original>H</original>
    <variation>R</variation>
    <location>
        <position position="370"/>
    </location>
</feature>
<feature type="sequence conflict" description="In Ref. 2; BAJ15895." evidence="7" ref="2">
    <original>L</original>
    <variation>R</variation>
    <location>
        <position position="377"/>
    </location>
</feature>
<feature type="sequence conflict" description="In Ref. 2; BAJ15895." evidence="7" ref="2">
    <original>A</original>
    <variation>S</variation>
    <location>
        <position position="391"/>
    </location>
</feature>
<feature type="sequence conflict" description="In Ref. 2; BAJ15895." evidence="7" ref="2">
    <original>M</original>
    <variation>K</variation>
    <location>
        <position position="394"/>
    </location>
</feature>
<feature type="sequence conflict" description="In Ref. 4; AAI24441/AAI65221." evidence="7" ref="4">
    <original>L</original>
    <variation>I</variation>
    <location>
        <position position="592"/>
    </location>
</feature>
<feature type="sequence conflict" description="In Ref. 2; BAJ15895." evidence="7" ref="2">
    <original>V</original>
    <variation>A</variation>
    <location>
        <position position="610"/>
    </location>
</feature>
<feature type="sequence conflict" description="In Ref. 2; BAJ15895 and 4; AAI24441/AAI65221." evidence="7" ref="2 4">
    <original>L</original>
    <variation>F</variation>
    <location>
        <position position="617"/>
    </location>
</feature>